<feature type="chain" id="PRO_0000449812" description="8-amino-8-demethylriboflavin N,N-dimethyltransferase">
    <location>
        <begin position="1"/>
        <end position="347"/>
    </location>
</feature>
<feature type="binding site" evidence="1">
    <location>
        <position position="209"/>
    </location>
    <ligand>
        <name>S-adenosyl-L-methionine</name>
        <dbReference type="ChEBI" id="CHEBI:59789"/>
    </ligand>
</feature>
<feature type="binding site" evidence="1">
    <location>
        <begin position="235"/>
        <end position="237"/>
    </location>
    <ligand>
        <name>S-adenosyl-L-methionine</name>
        <dbReference type="ChEBI" id="CHEBI:59789"/>
    </ligand>
</feature>
<feature type="helix" evidence="8">
    <location>
        <begin position="13"/>
        <end position="35"/>
    </location>
</feature>
<feature type="helix" evidence="8">
    <location>
        <begin position="38"/>
        <end position="41"/>
    </location>
</feature>
<feature type="turn" evidence="8">
    <location>
        <begin position="42"/>
        <end position="44"/>
    </location>
</feature>
<feature type="helix" evidence="8">
    <location>
        <begin position="49"/>
        <end position="56"/>
    </location>
</feature>
<feature type="helix" evidence="8">
    <location>
        <begin position="60"/>
        <end position="72"/>
    </location>
</feature>
<feature type="strand" evidence="8">
    <location>
        <begin position="75"/>
        <end position="79"/>
    </location>
</feature>
<feature type="turn" evidence="8">
    <location>
        <begin position="80"/>
        <end position="82"/>
    </location>
</feature>
<feature type="strand" evidence="8">
    <location>
        <begin position="83"/>
        <end position="86"/>
    </location>
</feature>
<feature type="helix" evidence="8">
    <location>
        <begin position="88"/>
        <end position="91"/>
    </location>
</feature>
<feature type="helix" evidence="8">
    <location>
        <begin position="102"/>
        <end position="107"/>
    </location>
</feature>
<feature type="helix" evidence="8">
    <location>
        <begin position="111"/>
        <end position="118"/>
    </location>
</feature>
<feature type="helix" evidence="8">
    <location>
        <begin position="120"/>
        <end position="126"/>
    </location>
</feature>
<feature type="helix" evidence="8">
    <location>
        <begin position="131"/>
        <end position="134"/>
    </location>
</feature>
<feature type="strand" evidence="8">
    <location>
        <begin position="135"/>
        <end position="137"/>
    </location>
</feature>
<feature type="helix" evidence="8">
    <location>
        <begin position="139"/>
        <end position="144"/>
    </location>
</feature>
<feature type="helix" evidence="8">
    <location>
        <begin position="146"/>
        <end position="148"/>
    </location>
</feature>
<feature type="helix" evidence="8">
    <location>
        <begin position="149"/>
        <end position="165"/>
    </location>
</feature>
<feature type="helix" evidence="8">
    <location>
        <begin position="167"/>
        <end position="171"/>
    </location>
</feature>
<feature type="helix" evidence="8">
    <location>
        <begin position="176"/>
        <end position="178"/>
    </location>
</feature>
<feature type="strand" evidence="8">
    <location>
        <begin position="180"/>
        <end position="185"/>
    </location>
</feature>
<feature type="helix" evidence="8">
    <location>
        <begin position="191"/>
        <end position="199"/>
    </location>
</feature>
<feature type="strand" evidence="8">
    <location>
        <begin position="200"/>
        <end position="202"/>
    </location>
</feature>
<feature type="strand" evidence="8">
    <location>
        <begin position="204"/>
        <end position="209"/>
    </location>
</feature>
<feature type="helix" evidence="8">
    <location>
        <begin position="211"/>
        <end position="213"/>
    </location>
</feature>
<feature type="helix" evidence="8">
    <location>
        <begin position="214"/>
        <end position="223"/>
    </location>
</feature>
<feature type="turn" evidence="8">
    <location>
        <begin position="227"/>
        <end position="229"/>
    </location>
</feature>
<feature type="strand" evidence="8">
    <location>
        <begin position="230"/>
        <end position="235"/>
    </location>
</feature>
<feature type="turn" evidence="8">
    <location>
        <begin position="237"/>
        <end position="239"/>
    </location>
</feature>
<feature type="strand" evidence="8">
    <location>
        <begin position="246"/>
        <end position="252"/>
    </location>
</feature>
<feature type="helix" evidence="8">
    <location>
        <begin position="259"/>
        <end position="270"/>
    </location>
</feature>
<feature type="strand" evidence="8">
    <location>
        <begin position="280"/>
        <end position="285"/>
    </location>
</feature>
<feature type="helix" evidence="8">
    <location>
        <begin position="293"/>
        <end position="305"/>
    </location>
</feature>
<feature type="helix" evidence="8">
    <location>
        <begin position="313"/>
        <end position="322"/>
    </location>
</feature>
<feature type="strand" evidence="8">
    <location>
        <begin position="325"/>
        <end position="333"/>
    </location>
</feature>
<feature type="turn" evidence="8">
    <location>
        <begin position="334"/>
        <end position="336"/>
    </location>
</feature>
<feature type="strand" evidence="8">
    <location>
        <begin position="337"/>
        <end position="344"/>
    </location>
</feature>
<proteinExistence type="evidence at protein level"/>
<comment type="function">
    <text evidence="2 3">Catalyzes the S-adenosyl methionine-dependent conversion of 8-amino-8-demethyl-D-riboflavin (AF) into 8-methylamino-8-demethyl-D-riboflavin (MAF) and roseoflavin (RoF), the last two steps in the biosynthesis of the antibiotic roseoflavin.</text>
</comment>
<comment type="catalytic activity">
    <reaction evidence="2 3">
        <text>8-amino-8-demethylriboflavin + 2 S-adenosyl-L-methionine = roseoflavin + 2 S-adenosyl-L-homocysteine + 2 H(+)</text>
        <dbReference type="Rhea" id="RHEA:51944"/>
        <dbReference type="ChEBI" id="CHEBI:15378"/>
        <dbReference type="ChEBI" id="CHEBI:57856"/>
        <dbReference type="ChEBI" id="CHEBI:59789"/>
        <dbReference type="ChEBI" id="CHEBI:136518"/>
        <dbReference type="ChEBI" id="CHEBI:136521"/>
        <dbReference type="EC" id="2.1.1.343"/>
    </reaction>
</comment>
<comment type="biophysicochemical properties">
    <kinetics>
        <KM evidence="2">57.7 uM for AF</KM>
        <KM evidence="3">4 uM for AF</KM>
        <KM evidence="2">28.6 uM for S-adenosyl-L-methionine</KM>
        <KM evidence="3">70 uM for S-adenosyl-L-methionine</KM>
        <Vmax evidence="2">0.58 umol/min/mg enzyme with AF as substrate</Vmax>
        <text evidence="2">kcat is 22.0 min(-1) with AF as substrate. kcat is 14.8 min(-1) with S-adenosyl-L-methionine as substrate.</text>
    </kinetics>
    <phDependence>
        <text evidence="2">Optimum pH is 8.8.</text>
    </phDependence>
    <temperatureDependence>
        <text evidence="2">Optimum temperature is 52 degrees Celsius.</text>
    </temperatureDependence>
</comment>
<comment type="pathway">
    <text evidence="2">Antibiotic biosynthesis.</text>
</comment>
<comment type="subunit">
    <text evidence="3">Homodimer.</text>
</comment>
<comment type="disruption phenotype">
    <text evidence="2">Inactivation of the gene leads to a strain that synthesizes AF but not MAF or RoF.</text>
</comment>
<comment type="similarity">
    <text evidence="1">Belongs to the class I-like SAM-binding methyltransferase superfamily. Cation-independent O-methyltransferase family.</text>
</comment>
<reference key="1">
    <citation type="journal article" date="2011" name="J. Biol. Chem.">
        <title>A novel N,N-8-amino-8-demethyl-D-riboflavin dimethyltransferase (RosA) catalyzing the two terminal steps of roseoflavin biosynthesis in Streptomyces davawensis.</title>
        <authorList>
            <person name="Jankowitsch F."/>
            <person name="Kuehm C."/>
            <person name="Kellner R."/>
            <person name="Kalinowski J."/>
            <person name="Pelzer S."/>
            <person name="Macheroux P."/>
            <person name="Mack M."/>
        </authorList>
    </citation>
    <scope>NUCLEOTIDE SEQUENCE [GENOMIC DNA]</scope>
    <scope>IDENTIFICATION BY MASS SPECTROMETRY</scope>
    <scope>FUNCTION</scope>
    <scope>CATALYTIC ACTIVITY</scope>
    <scope>BIOPHYSICOCHEMICAL PROPERTIES</scope>
    <scope>PATHWAY</scope>
    <scope>DISRUPTION PHENOTYPE</scope>
    <source>
        <strain>DSM 101723 / JCM 4913 / KCC S-0913 / 768</strain>
    </source>
</reference>
<reference key="2">
    <citation type="journal article" date="2012" name="J. Bacteriol.">
        <title>Genome sequence of the bacterium Streptomyces davawensis JCM 4913 and heterologous production of the unique antibiotic roseoflavin.</title>
        <authorList>
            <person name="Jankowitsch F."/>
            <person name="Schwarz J."/>
            <person name="Ruckert C."/>
            <person name="Gust B."/>
            <person name="Szczepanowski R."/>
            <person name="Blom J."/>
            <person name="Pelzer S."/>
            <person name="Kalinowski J."/>
            <person name="Mack M."/>
        </authorList>
    </citation>
    <scope>NUCLEOTIDE SEQUENCE [LARGE SCALE GENOMIC DNA]</scope>
    <source>
        <strain>DSM 101723 / JCM 4913 / KCC S-0913 / 768</strain>
    </source>
</reference>
<reference evidence="7" key="3">
    <citation type="journal article" date="2016" name="FEBS J.">
        <title>Structural and kinetic studies on RosA, the enzyme catalysing the methylation of 8-demethyl-8-amino-d-riboflavin to the antibiotic roseoflavin.</title>
        <authorList>
            <person name="Tongsook C."/>
            <person name="Uhl M.K."/>
            <person name="Jankowitsch F."/>
            <person name="Mack M."/>
            <person name="Gruber K."/>
            <person name="Macheroux P."/>
        </authorList>
    </citation>
    <scope>X-RAY CRYSTALLOGRAPHY (2.22 ANGSTROMS)</scope>
    <scope>FUNCTION</scope>
    <scope>CATALYTIC ACTIVITY</scope>
    <scope>BIOPHYSICOCHEMICAL PROPERTIES</scope>
    <scope>SUBUNIT</scope>
</reference>
<gene>
    <name evidence="4" type="primary">rosA</name>
    <name evidence="6" type="ORF">BN159_8032</name>
</gene>
<name>ROSA_STRDJ</name>
<keyword id="KW-0002">3D-structure</keyword>
<keyword id="KW-0045">Antibiotic biosynthesis</keyword>
<keyword id="KW-0489">Methyltransferase</keyword>
<keyword id="KW-1185">Reference proteome</keyword>
<keyword id="KW-0949">S-adenosyl-L-methionine</keyword>
<keyword id="KW-0808">Transferase</keyword>
<organism>
    <name type="scientific">Streptomyces davaonensis (strain DSM 101723 / JCM 4913 / KCC S-0913 / 768)</name>
    <dbReference type="NCBI Taxonomy" id="1214101"/>
    <lineage>
        <taxon>Bacteria</taxon>
        <taxon>Bacillati</taxon>
        <taxon>Actinomycetota</taxon>
        <taxon>Actinomycetes</taxon>
        <taxon>Kitasatosporales</taxon>
        <taxon>Streptomycetaceae</taxon>
        <taxon>Streptomyces</taxon>
    </lineage>
</organism>
<dbReference type="EC" id="2.1.1.343" evidence="2 3"/>
<dbReference type="EMBL" id="FR750395">
    <property type="protein sequence ID" value="CBY84436.1"/>
    <property type="molecule type" value="Genomic_DNA"/>
</dbReference>
<dbReference type="EMBL" id="HE971709">
    <property type="protein sequence ID" value="CCK32410.1"/>
    <property type="molecule type" value="Genomic_DNA"/>
</dbReference>
<dbReference type="RefSeq" id="WP_015662736.1">
    <property type="nucleotide sequence ID" value="NC_020504.1"/>
</dbReference>
<dbReference type="PDB" id="4D7K">
    <property type="method" value="X-ray"/>
    <property type="resolution" value="2.22 A"/>
    <property type="chains" value="A/B/C/D/E/F=1-347"/>
</dbReference>
<dbReference type="PDBsum" id="4D7K"/>
<dbReference type="SMR" id="K4RFM2"/>
<dbReference type="STRING" id="1214101.BN159_8032"/>
<dbReference type="KEGG" id="sdv:BN159_8032"/>
<dbReference type="PATRIC" id="fig|1214101.3.peg.8127"/>
<dbReference type="eggNOG" id="COG2226">
    <property type="taxonomic scope" value="Bacteria"/>
</dbReference>
<dbReference type="HOGENOM" id="CLU_005533_12_0_11"/>
<dbReference type="OrthoDB" id="4145676at2"/>
<dbReference type="BRENDA" id="2.1.1.343">
    <property type="organism ID" value="9909"/>
</dbReference>
<dbReference type="Proteomes" id="UP000008043">
    <property type="component" value="Chromosome"/>
</dbReference>
<dbReference type="GO" id="GO:0008171">
    <property type="term" value="F:O-methyltransferase activity"/>
    <property type="evidence" value="ECO:0007669"/>
    <property type="project" value="InterPro"/>
</dbReference>
<dbReference type="GO" id="GO:0046983">
    <property type="term" value="F:protein dimerization activity"/>
    <property type="evidence" value="ECO:0007669"/>
    <property type="project" value="InterPro"/>
</dbReference>
<dbReference type="GO" id="GO:0017000">
    <property type="term" value="P:antibiotic biosynthetic process"/>
    <property type="evidence" value="ECO:0007669"/>
    <property type="project" value="UniProtKB-KW"/>
</dbReference>
<dbReference type="GO" id="GO:0032259">
    <property type="term" value="P:methylation"/>
    <property type="evidence" value="ECO:0007669"/>
    <property type="project" value="UniProtKB-KW"/>
</dbReference>
<dbReference type="Gene3D" id="1.10.287.1350">
    <property type="match status" value="1"/>
</dbReference>
<dbReference type="Gene3D" id="3.40.50.150">
    <property type="entry name" value="Vaccinia Virus protein VP39"/>
    <property type="match status" value="1"/>
</dbReference>
<dbReference type="Gene3D" id="1.10.10.10">
    <property type="entry name" value="Winged helix-like DNA-binding domain superfamily/Winged helix DNA-binding domain"/>
    <property type="match status" value="1"/>
</dbReference>
<dbReference type="InterPro" id="IPR016461">
    <property type="entry name" value="COMT-like"/>
</dbReference>
<dbReference type="InterPro" id="IPR001077">
    <property type="entry name" value="O_MeTrfase_dom"/>
</dbReference>
<dbReference type="InterPro" id="IPR012967">
    <property type="entry name" value="Plant_O-MeTrfase_dimerisation"/>
</dbReference>
<dbReference type="InterPro" id="IPR029063">
    <property type="entry name" value="SAM-dependent_MTases_sf"/>
</dbReference>
<dbReference type="InterPro" id="IPR036388">
    <property type="entry name" value="WH-like_DNA-bd_sf"/>
</dbReference>
<dbReference type="InterPro" id="IPR036390">
    <property type="entry name" value="WH_DNA-bd_sf"/>
</dbReference>
<dbReference type="PANTHER" id="PTHR43712:SF2">
    <property type="entry name" value="O-METHYLTRANSFERASE CICE"/>
    <property type="match status" value="1"/>
</dbReference>
<dbReference type="PANTHER" id="PTHR43712">
    <property type="entry name" value="PUTATIVE (AFU_ORTHOLOGUE AFUA_4G14580)-RELATED"/>
    <property type="match status" value="1"/>
</dbReference>
<dbReference type="Pfam" id="PF08100">
    <property type="entry name" value="Dimerisation"/>
    <property type="match status" value="1"/>
</dbReference>
<dbReference type="Pfam" id="PF00891">
    <property type="entry name" value="Methyltransf_2"/>
    <property type="match status" value="1"/>
</dbReference>
<dbReference type="PIRSF" id="PIRSF005739">
    <property type="entry name" value="O-mtase"/>
    <property type="match status" value="1"/>
</dbReference>
<dbReference type="SUPFAM" id="SSF53335">
    <property type="entry name" value="S-adenosyl-L-methionine-dependent methyltransferases"/>
    <property type="match status" value="1"/>
</dbReference>
<dbReference type="SUPFAM" id="SSF46785">
    <property type="entry name" value="Winged helix' DNA-binding domain"/>
    <property type="match status" value="1"/>
</dbReference>
<dbReference type="PROSITE" id="PS51683">
    <property type="entry name" value="SAM_OMT_II"/>
    <property type="match status" value="1"/>
</dbReference>
<protein>
    <recommendedName>
        <fullName evidence="5">8-amino-8-demethylriboflavin N,N-dimethyltransferase</fullName>
        <ecNumber evidence="2 3">2.1.1.343</ecNumber>
    </recommendedName>
    <alternativeName>
        <fullName evidence="4">AF dimethyltransferase</fullName>
    </alternativeName>
    <alternativeName>
        <fullName evidence="4">N,N-8-amino-8-demethyl-D-riboflavin dimethyltransferase</fullName>
    </alternativeName>
</protein>
<sequence length="347" mass="37936">MRPEPTEHPERTAAQRLYQYNVDLKVAFVLYAVAKLHLPDLLADGPRTTADLAAATGSDPSRLRRLLRAAAGADALREVPEDSFELAPMGDLLRSGHPRSMRGMTTFFAEPDVLAAYGDLVESVRTGVPAFQLRHREPLYDFLARPQHKEVRDEFDAAMVEFGQYFADDFLTSFDFGRFTRFADIGGGRGQFLAGVLTAVPSSTGVLVDGPAVAASAHKFLASQNLTERVEVRIGDFFDVLPTGCDAYVLRGVLEDWADADAVRLLVRIRQAMGDAPEARLLILDSVIGETGELGKVLDLDMLVLVEGEHRTRAQWDDLLARAGFDIVGIHPAGDVWAVIECRGTAG</sequence>
<accession>K4RFM2</accession>
<accession>E7BBN5</accession>
<evidence type="ECO:0000255" key="1">
    <source>
        <dbReference type="PROSITE-ProRule" id="PRU01020"/>
    </source>
</evidence>
<evidence type="ECO:0000269" key="2">
    <source>
    </source>
</evidence>
<evidence type="ECO:0000269" key="3">
    <source>
    </source>
</evidence>
<evidence type="ECO:0000303" key="4">
    <source>
    </source>
</evidence>
<evidence type="ECO:0000305" key="5"/>
<evidence type="ECO:0000312" key="6">
    <source>
        <dbReference type="EMBL" id="CCK32410.1"/>
    </source>
</evidence>
<evidence type="ECO:0007744" key="7">
    <source>
        <dbReference type="PDB" id="4D7K"/>
    </source>
</evidence>
<evidence type="ECO:0007829" key="8">
    <source>
        <dbReference type="PDB" id="4D7K"/>
    </source>
</evidence>